<sequence>MAVQQKIRIKLKSYDHSLVDKWALKIIDVVKQTDAIIFGPIPLPTKTHVYTVNRSPHVDKKSREQFAFSSHKRLIEIINPTARTIDMLMKLELPSGVDVEIKS</sequence>
<comment type="function">
    <text evidence="1">Involved in the binding of tRNA to the ribosomes.</text>
</comment>
<comment type="subunit">
    <text evidence="1">Part of the 30S ribosomal subunit.</text>
</comment>
<comment type="similarity">
    <text evidence="1">Belongs to the universal ribosomal protein uS10 family.</text>
</comment>
<proteinExistence type="inferred from homology"/>
<protein>
    <recommendedName>
        <fullName evidence="1">Small ribosomal subunit protein uS10</fullName>
    </recommendedName>
    <alternativeName>
        <fullName evidence="2">30S ribosomal protein S10</fullName>
    </alternativeName>
</protein>
<dbReference type="EMBL" id="CP001099">
    <property type="protein sequence ID" value="ACF10603.1"/>
    <property type="molecule type" value="Genomic_DNA"/>
</dbReference>
<dbReference type="RefSeq" id="WP_012501438.1">
    <property type="nucleotide sequence ID" value="NC_011027.1"/>
</dbReference>
<dbReference type="SMR" id="B3QR66"/>
<dbReference type="STRING" id="517417.Cpar_0176"/>
<dbReference type="KEGG" id="cpc:Cpar_0176"/>
<dbReference type="eggNOG" id="COG0051">
    <property type="taxonomic scope" value="Bacteria"/>
</dbReference>
<dbReference type="HOGENOM" id="CLU_122625_1_3_10"/>
<dbReference type="OrthoDB" id="9804464at2"/>
<dbReference type="Proteomes" id="UP000008811">
    <property type="component" value="Chromosome"/>
</dbReference>
<dbReference type="GO" id="GO:1990904">
    <property type="term" value="C:ribonucleoprotein complex"/>
    <property type="evidence" value="ECO:0007669"/>
    <property type="project" value="UniProtKB-KW"/>
</dbReference>
<dbReference type="GO" id="GO:0005840">
    <property type="term" value="C:ribosome"/>
    <property type="evidence" value="ECO:0007669"/>
    <property type="project" value="UniProtKB-KW"/>
</dbReference>
<dbReference type="GO" id="GO:0003735">
    <property type="term" value="F:structural constituent of ribosome"/>
    <property type="evidence" value="ECO:0007669"/>
    <property type="project" value="InterPro"/>
</dbReference>
<dbReference type="GO" id="GO:0000049">
    <property type="term" value="F:tRNA binding"/>
    <property type="evidence" value="ECO:0007669"/>
    <property type="project" value="UniProtKB-UniRule"/>
</dbReference>
<dbReference type="GO" id="GO:0006412">
    <property type="term" value="P:translation"/>
    <property type="evidence" value="ECO:0007669"/>
    <property type="project" value="UniProtKB-UniRule"/>
</dbReference>
<dbReference type="FunFam" id="3.30.70.600:FF:000003">
    <property type="entry name" value="30S ribosomal protein S10"/>
    <property type="match status" value="1"/>
</dbReference>
<dbReference type="Gene3D" id="3.30.70.600">
    <property type="entry name" value="Ribosomal protein S10 domain"/>
    <property type="match status" value="1"/>
</dbReference>
<dbReference type="HAMAP" id="MF_00508">
    <property type="entry name" value="Ribosomal_uS10"/>
    <property type="match status" value="1"/>
</dbReference>
<dbReference type="InterPro" id="IPR001848">
    <property type="entry name" value="Ribosomal_uS10"/>
</dbReference>
<dbReference type="InterPro" id="IPR018268">
    <property type="entry name" value="Ribosomal_uS10_CS"/>
</dbReference>
<dbReference type="InterPro" id="IPR027486">
    <property type="entry name" value="Ribosomal_uS10_dom"/>
</dbReference>
<dbReference type="InterPro" id="IPR036838">
    <property type="entry name" value="Ribosomal_uS10_dom_sf"/>
</dbReference>
<dbReference type="NCBIfam" id="NF001861">
    <property type="entry name" value="PRK00596.1"/>
    <property type="match status" value="1"/>
</dbReference>
<dbReference type="NCBIfam" id="TIGR01049">
    <property type="entry name" value="rpsJ_bact"/>
    <property type="match status" value="1"/>
</dbReference>
<dbReference type="PANTHER" id="PTHR11700">
    <property type="entry name" value="30S RIBOSOMAL PROTEIN S10 FAMILY MEMBER"/>
    <property type="match status" value="1"/>
</dbReference>
<dbReference type="Pfam" id="PF00338">
    <property type="entry name" value="Ribosomal_S10"/>
    <property type="match status" value="1"/>
</dbReference>
<dbReference type="PRINTS" id="PR00971">
    <property type="entry name" value="RIBOSOMALS10"/>
</dbReference>
<dbReference type="SMART" id="SM01403">
    <property type="entry name" value="Ribosomal_S10"/>
    <property type="match status" value="1"/>
</dbReference>
<dbReference type="SUPFAM" id="SSF54999">
    <property type="entry name" value="Ribosomal protein S10"/>
    <property type="match status" value="1"/>
</dbReference>
<dbReference type="PROSITE" id="PS00361">
    <property type="entry name" value="RIBOSOMAL_S10"/>
    <property type="match status" value="1"/>
</dbReference>
<reference key="1">
    <citation type="submission" date="2008-06" db="EMBL/GenBank/DDBJ databases">
        <title>Complete sequence of Chlorobaculum parvum NCIB 8327.</title>
        <authorList>
            <consortium name="US DOE Joint Genome Institute"/>
            <person name="Lucas S."/>
            <person name="Copeland A."/>
            <person name="Lapidus A."/>
            <person name="Glavina del Rio T."/>
            <person name="Dalin E."/>
            <person name="Tice H."/>
            <person name="Bruce D."/>
            <person name="Goodwin L."/>
            <person name="Pitluck S."/>
            <person name="Schmutz J."/>
            <person name="Larimer F."/>
            <person name="Land M."/>
            <person name="Hauser L."/>
            <person name="Kyrpides N."/>
            <person name="Mikhailova N."/>
            <person name="Zhao F."/>
            <person name="Li T."/>
            <person name="Liu Z."/>
            <person name="Overmann J."/>
            <person name="Bryant D.A."/>
            <person name="Richardson P."/>
        </authorList>
    </citation>
    <scope>NUCLEOTIDE SEQUENCE [LARGE SCALE GENOMIC DNA]</scope>
    <source>
        <strain>DSM 263 / NCIMB 8327</strain>
    </source>
</reference>
<organism>
    <name type="scientific">Chlorobaculum parvum (strain DSM 263 / NCIMB 8327)</name>
    <name type="common">Chlorobium vibrioforme subsp. thiosulfatophilum</name>
    <dbReference type="NCBI Taxonomy" id="517417"/>
    <lineage>
        <taxon>Bacteria</taxon>
        <taxon>Pseudomonadati</taxon>
        <taxon>Chlorobiota</taxon>
        <taxon>Chlorobiia</taxon>
        <taxon>Chlorobiales</taxon>
        <taxon>Chlorobiaceae</taxon>
        <taxon>Chlorobaculum</taxon>
    </lineage>
</organism>
<evidence type="ECO:0000255" key="1">
    <source>
        <dbReference type="HAMAP-Rule" id="MF_00508"/>
    </source>
</evidence>
<evidence type="ECO:0000305" key="2"/>
<keyword id="KW-0687">Ribonucleoprotein</keyword>
<keyword id="KW-0689">Ribosomal protein</keyword>
<name>RS10_CHLP8</name>
<gene>
    <name evidence="1" type="primary">rpsJ</name>
    <name type="ordered locus">Cpar_0176</name>
</gene>
<accession>B3QR66</accession>
<feature type="chain" id="PRO_1000127098" description="Small ribosomal subunit protein uS10">
    <location>
        <begin position="1"/>
        <end position="103"/>
    </location>
</feature>